<gene>
    <name type="primary">R1B-11</name>
    <name type="ORF">PGEC747E24.1</name>
    <name type="ORF">PGEC872C13.1</name>
</gene>
<evidence type="ECO:0000250" key="1"/>
<evidence type="ECO:0000255" key="2"/>
<evidence type="ECO:0000255" key="3">
    <source>
        <dbReference type="PROSITE-ProRule" id="PRU00280"/>
    </source>
</evidence>
<evidence type="ECO:0000305" key="4"/>
<reference key="1">
    <citation type="journal article" date="2005" name="Plant J.">
        <title>The R1 resistance gene cluster contains three groups of independently evolving, type I R1 homologues and shows substantial structural variation among haplotypes of Solanum demissum.</title>
        <authorList>
            <person name="Kuang H."/>
            <person name="Wei F."/>
            <person name="Marano M.R."/>
            <person name="Wirtz U."/>
            <person name="Wang X."/>
            <person name="Liu J."/>
            <person name="Shum W.P."/>
            <person name="Zaborsky J."/>
            <person name="Tallon L.J."/>
            <person name="Rensink W."/>
            <person name="Lobst S."/>
            <person name="Zhang P."/>
            <person name="Tornqvist C.-E."/>
            <person name="Tek A."/>
            <person name="Bamberg J."/>
            <person name="Helgeson J."/>
            <person name="Fry W."/>
            <person name="You F."/>
            <person name="Luo M.-C."/>
            <person name="Jiang J."/>
            <person name="Buell C.R."/>
            <person name="Baker B."/>
        </authorList>
    </citation>
    <scope>NUCLEOTIDE SEQUENCE [GENOMIC DNA]</scope>
</reference>
<proteinExistence type="uncertain"/>
<sequence>MIEIWKSQCTRILSISPDSGIQYWKKTESMKSQYLEEVGVALDSFVYWKEVIWKTKQEFRAEYSFPKTSLAANKVIDDDDINIDSLKFVKEVINVFVGNINVLVKINDPRSWFFVPGLKEQIEQVLKEFKLLRFFVCFVSNKCIEPQYRCSTFYSHVLIEASHIAMVVCLHLPIYGNGNQDLAPSEKMIDIWKSHCPDSFPYMKVISKTNVIIKTLYVDELRSCPSCNSYDSFDNWKEVIWKTKQEFRAEYSFPKTSLAVNKVDDVNTHSPKFVMEVIDVFVGNLNVLVEINDPSSWLFVPGHMKEQIEQVLKELKLLRFFVCFVSSKCIEPQYRCTTFYTLVLIEASHNAMVVWLHLPVYGNGNQDLAPSEVSRLFSDFMEMKIKSIEPGISRNSIYIDVLQALKSTIPQAQKKQLDIPTHSLTVGFSGQMANLQEMLCLLRDNLIHLPILDLEFHLQDMDSVIVDAGLLIYSLYDIKGEKEDTVLDDMNQALGFDLPRNIEPIKAMVYLVMQKAFHCNLPRIHGLGYVDFLLKNLNDFQGRYSDSLAFLKNQLQVIQTEFESLQPFLKVVAEEPHNKLKTLNEDCATQIIRKAYEVEYVVDACINKETPHWCLKCWLLDIIEENTCIKAKIQEKNTVEDTMKSVIARTSSQLARTPRMNEEIVGFEDDLLLALLRDAIGEGSVRRELHANELSDMLRKTLLPRRYLILVDDVWENSVWDDLRGCFPDANNRSRIFGPSHPMLGPPKSKLPTHQMLSTGREVGEQVANNLGTHIHNDSRAIVDQSYHVLPCHLKSCFLYFGAFLEDRVIDISRLIRLWISEAFIKSSEGRSLEDIAEGYLENLIGRNLVMVTQRAISDGKVKACRLHDVLLDFCKERAAEENFLLWIKRDQTTKAVYSHKQHAHLAFTEMDNLVEWSASCSLVGSVLFKSYDPYFACRPLSSHAFAVSHILLNFKFLKVLDLEHQIVIDFIPTELPYLRYFSALIDQNSIPSSKSNLWNLETLILKRRSAATYKTLLLPSTVWDMVKLIYLYIPNFSPENKKALFKNSPKLDDLETLSNPYFARVEDYLSETVDHLKHLEVLELYRVEFGDHGEWKVSSGKFPKLKILKLDYVSLMKWIVADDAFPNLEQLVSLGCQNLMEIPSCFTDILSLKYIEVDICNKSVVKSAKYIQETQVEYNQNTNFKLVIIKKLVLKFDRFHGDEEIRKRLSSLPGIKSISINRGEKKLTVGGDVDADEVRLVVGKLNKRDML</sequence>
<organism>
    <name type="scientific">Solanum demissum</name>
    <name type="common">Wild potato</name>
    <dbReference type="NCBI Taxonomy" id="50514"/>
    <lineage>
        <taxon>Eukaryota</taxon>
        <taxon>Viridiplantae</taxon>
        <taxon>Streptophyta</taxon>
        <taxon>Embryophyta</taxon>
        <taxon>Tracheophyta</taxon>
        <taxon>Spermatophyta</taxon>
        <taxon>Magnoliopsida</taxon>
        <taxon>eudicotyledons</taxon>
        <taxon>Gunneridae</taxon>
        <taxon>Pentapetalae</taxon>
        <taxon>asterids</taxon>
        <taxon>lamiids</taxon>
        <taxon>Solanales</taxon>
        <taxon>Solanaceae</taxon>
        <taxon>Solanoideae</taxon>
        <taxon>Solaneae</taxon>
        <taxon>Solanum</taxon>
    </lineage>
</organism>
<dbReference type="EMBL" id="AC149267">
    <property type="protein sequence ID" value="AAT38806.1"/>
    <property type="molecule type" value="Genomic_DNA"/>
</dbReference>
<dbReference type="EMBL" id="AC149266">
    <property type="protein sequence ID" value="AAT38780.1"/>
    <property type="status" value="ALT_SEQ"/>
    <property type="molecule type" value="Genomic_DNA"/>
</dbReference>
<dbReference type="SMR" id="Q6L3Y2"/>
<dbReference type="GO" id="GO:0005737">
    <property type="term" value="C:cytoplasm"/>
    <property type="evidence" value="ECO:0007669"/>
    <property type="project" value="UniProtKB-SubCell"/>
</dbReference>
<dbReference type="GO" id="GO:0016020">
    <property type="term" value="C:membrane"/>
    <property type="evidence" value="ECO:0007669"/>
    <property type="project" value="UniProtKB-SubCell"/>
</dbReference>
<dbReference type="GO" id="GO:0043531">
    <property type="term" value="F:ADP binding"/>
    <property type="evidence" value="ECO:0007669"/>
    <property type="project" value="InterPro"/>
</dbReference>
<dbReference type="GO" id="GO:0005524">
    <property type="term" value="F:ATP binding"/>
    <property type="evidence" value="ECO:0007669"/>
    <property type="project" value="UniProtKB-KW"/>
</dbReference>
<dbReference type="GO" id="GO:0046872">
    <property type="term" value="F:metal ion binding"/>
    <property type="evidence" value="ECO:0007669"/>
    <property type="project" value="InterPro"/>
</dbReference>
<dbReference type="GO" id="GO:0009626">
    <property type="term" value="P:plant-type hypersensitive response"/>
    <property type="evidence" value="ECO:0007669"/>
    <property type="project" value="UniProtKB-KW"/>
</dbReference>
<dbReference type="CDD" id="cd14798">
    <property type="entry name" value="RX-CC_like"/>
    <property type="match status" value="1"/>
</dbReference>
<dbReference type="FunFam" id="1.10.10.10:FF:000322">
    <property type="entry name" value="Probable disease resistance protein At1g63360"/>
    <property type="match status" value="1"/>
</dbReference>
<dbReference type="Gene3D" id="3.40.50.300">
    <property type="entry name" value="P-loop containing nucleotide triphosphate hydrolases"/>
    <property type="match status" value="1"/>
</dbReference>
<dbReference type="Gene3D" id="3.80.10.10">
    <property type="entry name" value="Ribonuclease Inhibitor"/>
    <property type="match status" value="1"/>
</dbReference>
<dbReference type="Gene3D" id="1.10.10.10">
    <property type="entry name" value="Winged helix-like DNA-binding domain superfamily/Winged helix DNA-binding domain"/>
    <property type="match status" value="1"/>
</dbReference>
<dbReference type="InterPro" id="IPR006121">
    <property type="entry name" value="HMA_dom"/>
</dbReference>
<dbReference type="InterPro" id="IPR032675">
    <property type="entry name" value="LRR_dom_sf"/>
</dbReference>
<dbReference type="InterPro" id="IPR002182">
    <property type="entry name" value="NB-ARC"/>
</dbReference>
<dbReference type="InterPro" id="IPR027417">
    <property type="entry name" value="P-loop_NTPase"/>
</dbReference>
<dbReference type="InterPro" id="IPR021929">
    <property type="entry name" value="R1A-like_N"/>
</dbReference>
<dbReference type="InterPro" id="IPR038005">
    <property type="entry name" value="RX-like_CC"/>
</dbReference>
<dbReference type="InterPro" id="IPR036388">
    <property type="entry name" value="WH-like_DNA-bd_sf"/>
</dbReference>
<dbReference type="PANTHER" id="PTHR15140:SF33">
    <property type="entry name" value="LATE BLIGHT RESISTANCE PROTEIN HOMOLOG R1A-3 ISOFORM X1"/>
    <property type="match status" value="1"/>
</dbReference>
<dbReference type="PANTHER" id="PTHR15140">
    <property type="entry name" value="TUBULIN-SPECIFIC CHAPERONE E"/>
    <property type="match status" value="1"/>
</dbReference>
<dbReference type="Pfam" id="PF00931">
    <property type="entry name" value="NB-ARC"/>
    <property type="match status" value="1"/>
</dbReference>
<dbReference type="Pfam" id="PF12061">
    <property type="entry name" value="NB-LRR"/>
    <property type="match status" value="3"/>
</dbReference>
<dbReference type="Pfam" id="PF23559">
    <property type="entry name" value="WH_DRP"/>
    <property type="match status" value="1"/>
</dbReference>
<dbReference type="SUPFAM" id="SSF52540">
    <property type="entry name" value="P-loop containing nucleoside triphosphate hydrolases"/>
    <property type="match status" value="1"/>
</dbReference>
<dbReference type="SUPFAM" id="SSF52047">
    <property type="entry name" value="RNI-like"/>
    <property type="match status" value="1"/>
</dbReference>
<dbReference type="PROSITE" id="PS50846">
    <property type="entry name" value="HMA_2"/>
    <property type="match status" value="1"/>
</dbReference>
<keyword id="KW-0067">ATP-binding</keyword>
<keyword id="KW-0175">Coiled coil</keyword>
<keyword id="KW-0963">Cytoplasm</keyword>
<keyword id="KW-0381">Hypersensitive response</keyword>
<keyword id="KW-0433">Leucine-rich repeat</keyword>
<keyword id="KW-0472">Membrane</keyword>
<keyword id="KW-0547">Nucleotide-binding</keyword>
<keyword id="KW-0611">Plant defense</keyword>
<keyword id="KW-0677">Repeat</keyword>
<comment type="function">
    <text>Confers resistance to late blight (Phytophthora infestans) races carrying the avirulence gene Avr1. Resistance proteins guard the plant against pathogens that contain an appropriate avirulence protein via an indirect interaction with this avirulence protein. That triggers a defense system including the hypersensitive response, which restricts the pathogen growth.</text>
</comment>
<comment type="subcellular location">
    <subcellularLocation>
        <location evidence="1">Cytoplasm</location>
    </subcellularLocation>
    <subcellularLocation>
        <location evidence="1">Membrane</location>
        <topology evidence="1">Peripheral membrane protein</topology>
    </subcellularLocation>
</comment>
<comment type="miscellaneous">
    <text>This protein is encoded by the haplotype B genome of the allohexaploid Solanum demissum.</text>
</comment>
<comment type="similarity">
    <text evidence="4">Belongs to the disease resistance NB-LRR family.</text>
</comment>
<comment type="caution">
    <text evidence="4">Could be the product of a pseudogene.</text>
</comment>
<comment type="sequence caution" evidence="4">
    <conflict type="erroneous gene model prediction">
        <sequence resource="EMBL-CDS" id="AAT38780"/>
    </conflict>
</comment>
<protein>
    <recommendedName>
        <fullName>Putative late blight resistance protein homolog R1B-11</fullName>
    </recommendedName>
</protein>
<accession>Q6L3Y2</accession>
<accession>Q6L3Z6</accession>
<name>R1B11_SOLDE</name>
<feature type="chain" id="PRO_0000233965" description="Putative late blight resistance protein homolog R1B-11">
    <location>
        <begin position="1"/>
        <end position="1252"/>
    </location>
</feature>
<feature type="domain" description="NB-ARC 1">
    <location>
        <begin position="684"/>
        <end position="736"/>
    </location>
</feature>
<feature type="domain" description="NB-ARC 2">
    <location>
        <begin position="786"/>
        <end position="830"/>
    </location>
</feature>
<feature type="repeat" description="LRR 1">
    <location>
        <begin position="955"/>
        <end position="980"/>
    </location>
</feature>
<feature type="repeat" description="LRR 2">
    <location>
        <begin position="998"/>
        <end position="1026"/>
    </location>
</feature>
<feature type="repeat" description="LRR 3">
    <location>
        <begin position="1077"/>
        <end position="1100"/>
    </location>
</feature>
<feature type="repeat" description="LRR 4">
    <location>
        <begin position="1103"/>
        <end position="1125"/>
    </location>
</feature>
<feature type="repeat" description="LRR 5">
    <location>
        <begin position="1126"/>
        <end position="1149"/>
    </location>
</feature>
<feature type="repeat" description="LRR 6">
    <location>
        <begin position="1187"/>
        <end position="1212"/>
    </location>
</feature>
<feature type="domain" description="HMA" evidence="3">
    <location>
        <begin position="1188"/>
        <end position="1252"/>
    </location>
</feature>
<feature type="repeat" description="LRR 7">
    <location>
        <begin position="1213"/>
        <end position="1236"/>
    </location>
</feature>
<feature type="coiled-coil region" evidence="2">
    <location>
        <begin position="543"/>
        <end position="566"/>
    </location>
</feature>